<name>LEU1_BUCRP</name>
<gene>
    <name evidence="1" type="primary">leuA</name>
</gene>
<evidence type="ECO:0000255" key="1">
    <source>
        <dbReference type="HAMAP-Rule" id="MF_01025"/>
    </source>
</evidence>
<evidence type="ECO:0000305" key="2"/>
<keyword id="KW-0028">Amino-acid biosynthesis</keyword>
<keyword id="KW-0100">Branched-chain amino acid biosynthesis</keyword>
<keyword id="KW-0963">Cytoplasm</keyword>
<keyword id="KW-0432">Leucine biosynthesis</keyword>
<keyword id="KW-0464">Manganese</keyword>
<keyword id="KW-0479">Metal-binding</keyword>
<keyword id="KW-0614">Plasmid</keyword>
<keyword id="KW-0808">Transferase</keyword>
<dbReference type="EC" id="2.3.3.13" evidence="1"/>
<dbReference type="EMBL" id="X71612">
    <property type="protein sequence ID" value="CAA50615.1"/>
    <property type="molecule type" value="Genomic_DNA"/>
</dbReference>
<dbReference type="SMR" id="P48571"/>
<dbReference type="UniPathway" id="UPA00048">
    <property type="reaction ID" value="UER00070"/>
</dbReference>
<dbReference type="GO" id="GO:0005829">
    <property type="term" value="C:cytosol"/>
    <property type="evidence" value="ECO:0007669"/>
    <property type="project" value="TreeGrafter"/>
</dbReference>
<dbReference type="GO" id="GO:0003852">
    <property type="term" value="F:2-isopropylmalate synthase activity"/>
    <property type="evidence" value="ECO:0007669"/>
    <property type="project" value="UniProtKB-UniRule"/>
</dbReference>
<dbReference type="GO" id="GO:0003985">
    <property type="term" value="F:acetyl-CoA C-acetyltransferase activity"/>
    <property type="evidence" value="ECO:0007669"/>
    <property type="project" value="UniProtKB-UniRule"/>
</dbReference>
<dbReference type="GO" id="GO:0030145">
    <property type="term" value="F:manganese ion binding"/>
    <property type="evidence" value="ECO:0007669"/>
    <property type="project" value="UniProtKB-UniRule"/>
</dbReference>
<dbReference type="GO" id="GO:0009098">
    <property type="term" value="P:L-leucine biosynthetic process"/>
    <property type="evidence" value="ECO:0007669"/>
    <property type="project" value="UniProtKB-UniRule"/>
</dbReference>
<dbReference type="CDD" id="cd07940">
    <property type="entry name" value="DRE_TIM_IPMS"/>
    <property type="match status" value="1"/>
</dbReference>
<dbReference type="FunFam" id="1.10.238.260:FF:000001">
    <property type="entry name" value="2-isopropylmalate synthase"/>
    <property type="match status" value="1"/>
</dbReference>
<dbReference type="FunFam" id="3.20.20.70:FF:000010">
    <property type="entry name" value="2-isopropylmalate synthase"/>
    <property type="match status" value="1"/>
</dbReference>
<dbReference type="FunFam" id="3.30.160.270:FF:000001">
    <property type="entry name" value="2-isopropylmalate synthase"/>
    <property type="match status" value="1"/>
</dbReference>
<dbReference type="Gene3D" id="1.10.238.260">
    <property type="match status" value="1"/>
</dbReference>
<dbReference type="Gene3D" id="3.30.160.270">
    <property type="match status" value="1"/>
</dbReference>
<dbReference type="Gene3D" id="3.20.20.70">
    <property type="entry name" value="Aldolase class I"/>
    <property type="match status" value="1"/>
</dbReference>
<dbReference type="HAMAP" id="MF_01025">
    <property type="entry name" value="LeuA_type1"/>
    <property type="match status" value="1"/>
</dbReference>
<dbReference type="InterPro" id="IPR050073">
    <property type="entry name" value="2-IPM_HCS-like"/>
</dbReference>
<dbReference type="InterPro" id="IPR013709">
    <property type="entry name" value="2-isopropylmalate_synth_dimer"/>
</dbReference>
<dbReference type="InterPro" id="IPR002034">
    <property type="entry name" value="AIPM/Hcit_synth_CS"/>
</dbReference>
<dbReference type="InterPro" id="IPR013785">
    <property type="entry name" value="Aldolase_TIM"/>
</dbReference>
<dbReference type="InterPro" id="IPR054691">
    <property type="entry name" value="LeuA/HCS_post-cat"/>
</dbReference>
<dbReference type="InterPro" id="IPR036230">
    <property type="entry name" value="LeuA_allosteric_dom_sf"/>
</dbReference>
<dbReference type="InterPro" id="IPR005671">
    <property type="entry name" value="LeuA_bact_synth"/>
</dbReference>
<dbReference type="InterPro" id="IPR000891">
    <property type="entry name" value="PYR_CT"/>
</dbReference>
<dbReference type="NCBIfam" id="TIGR00973">
    <property type="entry name" value="leuA_bact"/>
    <property type="match status" value="1"/>
</dbReference>
<dbReference type="NCBIfam" id="NF002084">
    <property type="entry name" value="PRK00915.1-1"/>
    <property type="match status" value="1"/>
</dbReference>
<dbReference type="NCBIfam" id="NF002086">
    <property type="entry name" value="PRK00915.1-3"/>
    <property type="match status" value="1"/>
</dbReference>
<dbReference type="PANTHER" id="PTHR10277:SF9">
    <property type="entry name" value="2-ISOPROPYLMALATE SYNTHASE 1, CHLOROPLASTIC-RELATED"/>
    <property type="match status" value="1"/>
</dbReference>
<dbReference type="PANTHER" id="PTHR10277">
    <property type="entry name" value="HOMOCITRATE SYNTHASE-RELATED"/>
    <property type="match status" value="1"/>
</dbReference>
<dbReference type="Pfam" id="PF22617">
    <property type="entry name" value="HCS_D2"/>
    <property type="match status" value="1"/>
</dbReference>
<dbReference type="Pfam" id="PF00682">
    <property type="entry name" value="HMGL-like"/>
    <property type="match status" value="1"/>
</dbReference>
<dbReference type="Pfam" id="PF08502">
    <property type="entry name" value="LeuA_dimer"/>
    <property type="match status" value="1"/>
</dbReference>
<dbReference type="SMART" id="SM00917">
    <property type="entry name" value="LeuA_dimer"/>
    <property type="match status" value="1"/>
</dbReference>
<dbReference type="SUPFAM" id="SSF110921">
    <property type="entry name" value="2-isopropylmalate synthase LeuA, allosteric (dimerisation) domain"/>
    <property type="match status" value="1"/>
</dbReference>
<dbReference type="SUPFAM" id="SSF51569">
    <property type="entry name" value="Aldolase"/>
    <property type="match status" value="1"/>
</dbReference>
<dbReference type="PROSITE" id="PS00815">
    <property type="entry name" value="AIPM_HOMOCIT_SYNTH_1"/>
    <property type="match status" value="1"/>
</dbReference>
<dbReference type="PROSITE" id="PS00816">
    <property type="entry name" value="AIPM_HOMOCIT_SYNTH_2"/>
    <property type="match status" value="1"/>
</dbReference>
<dbReference type="PROSITE" id="PS50991">
    <property type="entry name" value="PYR_CT"/>
    <property type="match status" value="1"/>
</dbReference>
<reference key="1">
    <citation type="journal article" date="1995" name="J. Mol. Evol.">
        <title>Discovery and molecular characterization of a plasmid localized in Buchnera sp. bacterial endosymbiont of the aphid Rhopalosiphum padi.</title>
        <authorList>
            <person name="Bracho A.M."/>
            <person name="Martinez-Torres D."/>
            <person name="Moya A."/>
            <person name="Latorre A."/>
        </authorList>
    </citation>
    <scope>NUCLEOTIDE SEQUENCE [GENOMIC DNA]</scope>
</reference>
<organism>
    <name type="scientific">Buchnera aphidicola subsp. Rhopalosiphum padi</name>
    <dbReference type="NCBI Taxonomy" id="98793"/>
    <lineage>
        <taxon>Bacteria</taxon>
        <taxon>Pseudomonadati</taxon>
        <taxon>Pseudomonadota</taxon>
        <taxon>Gammaproteobacteria</taxon>
        <taxon>Enterobacterales</taxon>
        <taxon>Erwiniaceae</taxon>
        <taxon>Buchnera</taxon>
    </lineage>
</organism>
<geneLocation type="plasmid">
    <name>pRPE</name>
</geneLocation>
<protein>
    <recommendedName>
        <fullName evidence="1">2-isopropylmalate synthase</fullName>
        <ecNumber evidence="1">2.3.3.13</ecNumber>
    </recommendedName>
    <alternativeName>
        <fullName evidence="1">Alpha-IPM synthase</fullName>
    </alternativeName>
    <alternativeName>
        <fullName evidence="1">Alpha-isopropylmalate synthase</fullName>
    </alternativeName>
</protein>
<proteinExistence type="inferred from homology"/>
<comment type="function">
    <text evidence="1">Catalyzes the condensation of the acetyl group of acetyl-CoA with 3-methyl-2-oxobutanoate (2-ketoisovalerate) to form 3-carboxy-3-hydroxy-4-methylpentanoate (2-isopropylmalate).</text>
</comment>
<comment type="catalytic activity">
    <reaction evidence="1">
        <text>3-methyl-2-oxobutanoate + acetyl-CoA + H2O = (2S)-2-isopropylmalate + CoA + H(+)</text>
        <dbReference type="Rhea" id="RHEA:21524"/>
        <dbReference type="ChEBI" id="CHEBI:1178"/>
        <dbReference type="ChEBI" id="CHEBI:11851"/>
        <dbReference type="ChEBI" id="CHEBI:15377"/>
        <dbReference type="ChEBI" id="CHEBI:15378"/>
        <dbReference type="ChEBI" id="CHEBI:57287"/>
        <dbReference type="ChEBI" id="CHEBI:57288"/>
        <dbReference type="EC" id="2.3.3.13"/>
    </reaction>
</comment>
<comment type="cofactor">
    <cofactor evidence="1">
        <name>Mn(2+)</name>
        <dbReference type="ChEBI" id="CHEBI:29035"/>
    </cofactor>
</comment>
<comment type="pathway">
    <text evidence="1">Amino-acid biosynthesis; L-leucine biosynthesis; L-leucine from 3-methyl-2-oxobutanoate: step 1/4.</text>
</comment>
<comment type="subunit">
    <text evidence="1">Homodimer.</text>
</comment>
<comment type="subcellular location">
    <subcellularLocation>
        <location evidence="1">Cytoplasm</location>
    </subcellularLocation>
</comment>
<comment type="similarity">
    <text evidence="1 2">Belongs to the alpha-IPM synthase/homocitrate synthase family. LeuA type 1 subfamily.</text>
</comment>
<feature type="chain" id="PRO_0000140340" description="2-isopropylmalate synthase">
    <location>
        <begin position="1"/>
        <end position="518"/>
    </location>
</feature>
<feature type="domain" description="Pyruvate carboxyltransferase" evidence="1">
    <location>
        <begin position="5"/>
        <end position="267"/>
    </location>
</feature>
<feature type="region of interest" description="Regulatory domain" evidence="1">
    <location>
        <begin position="392"/>
        <end position="518"/>
    </location>
</feature>
<feature type="binding site" evidence="1">
    <location>
        <position position="14"/>
    </location>
    <ligand>
        <name>Mn(2+)</name>
        <dbReference type="ChEBI" id="CHEBI:29035"/>
    </ligand>
</feature>
<feature type="binding site" evidence="1">
    <location>
        <position position="202"/>
    </location>
    <ligand>
        <name>Mn(2+)</name>
        <dbReference type="ChEBI" id="CHEBI:29035"/>
    </ligand>
</feature>
<feature type="binding site" evidence="1">
    <location>
        <position position="204"/>
    </location>
    <ligand>
        <name>Mn(2+)</name>
        <dbReference type="ChEBI" id="CHEBI:29035"/>
    </ligand>
</feature>
<feature type="binding site" evidence="1">
    <location>
        <position position="238"/>
    </location>
    <ligand>
        <name>Mn(2+)</name>
        <dbReference type="ChEBI" id="CHEBI:29035"/>
    </ligand>
</feature>
<accession>P48571</accession>
<sequence>MNSQVIIFDTTLRDGEQALQASLSVKQKLQIALSLENTGIDIIEVGFPISSPGDFKSVQTISKNIKNSRICSLARCLDKDIDAAAEAMHSSNAFRIHIFLATSILHMESKLKKNFDQIIDMAITSVKRALRYTDDVEFSCEDASRTTMDNLCRIVEKLINAGVKTINIPDTVGYTVPNELSSIIHNLFQRVPNIDKSIISVHCHNDLGMAVGNSISAIQAGARQIEGTINGIGERAGNTALEEVIIAIKVREDVLGVSTKIKHKEIYRTSQIISQICNLPIPPNKAIVGSNAFAHSSGIHQDGVLKNRKNYEIMEPSSIGLKEVKLNLTSRSGRAAVKHYMTEMGYRECDYKIDELYASFLKLADKKGQVFDYDLEALAFINQQQEELEHFSLSFFSVQSISNGLSTASVKLLCGKKTFIESATTSNGPIDAIYQALNRITHFPIILQKYQLIAKGKGKDALGQVDILVEHKKRKFHGMGLATDIIESSAQAMVNVLNNIWKANQVNEKLKKLKKINN</sequence>